<sequence length="83" mass="9181">MKASMFLALAGLVLLFVVGYASESEEKDFPRELLSKIFAVDDFKGEERGCKGFGDSCTPGKNECCPNYACSSKHKWCKVYLGK</sequence>
<organism>
    <name type="scientific">Cyriopagopus hainanus</name>
    <name type="common">Chinese bird spider</name>
    <name type="synonym">Haplopelma hainanum</name>
    <dbReference type="NCBI Taxonomy" id="209901"/>
    <lineage>
        <taxon>Eukaryota</taxon>
        <taxon>Metazoa</taxon>
        <taxon>Ecdysozoa</taxon>
        <taxon>Arthropoda</taxon>
        <taxon>Chelicerata</taxon>
        <taxon>Arachnida</taxon>
        <taxon>Araneae</taxon>
        <taxon>Mygalomorphae</taxon>
        <taxon>Theraphosidae</taxon>
        <taxon>Haplopelma</taxon>
    </lineage>
</organism>
<comment type="function">
    <text evidence="4">Selective antagonist of neuronal tetrodotoxin (TTX)-sensitive voltage-gated sodium channels (IC(50)=1270 nM on Nav1.1/SCN1A, 270 nM on Nav1.2/SCN2A, 491 nM on Nav1.3/SCN3A and 232 nM on Nav1.7/SCN9A). This toxin suppress Nav1.7 current amplitude without significantly altering the activation, inactivation, and repriming kinetics. Short extreme depolarizations partially activate the toxin-bound channel, indicating voltage-dependent inhibition of this toxin. This toxin increases the deactivation of the Nav1.7 current after extreme depolarizations. The toxin-Nav1.7 complex is gradually dissociated upon prolonged strong depolarizations in a voltage-dependent manner, and the unbound toxin rebinds to Nav1.7 after a long repolarization. Moreover, analysis of chimeric channels showed that the DIIS3-S4 linker is critical for toxin binding to Nav1.7. These data are consistent with this toxin interacting with Nav1.7 site 4 and trapping the domain II voltage sensor in the closed state.</text>
</comment>
<comment type="subunit">
    <text evidence="5">Monomer.</text>
</comment>
<comment type="subcellular location">
    <subcellularLocation>
        <location evidence="2 4">Secreted</location>
    </subcellularLocation>
</comment>
<comment type="tissue specificity">
    <text evidence="10 11">Expressed by the venom gland.</text>
</comment>
<comment type="domain">
    <text evidence="4">The presence of a 'disulfide through disulfide knot' structurally defines this protein as a knottin.</text>
</comment>
<comment type="mass spectrometry" mass="3607.6" method="Electrospray" evidence="5"/>
<comment type="miscellaneous">
    <text evidence="2 4">Negative results: has no activity on Nav1.4, Nav1.5, Nav1.8 and Nav1.9 sodium and calcium currents.</text>
</comment>
<comment type="similarity">
    <text evidence="9">Belongs to the neurotoxin 10 (Hwtx-1) family. 15 (Hntx-3) subfamily.</text>
</comment>
<comment type="caution">
    <text evidence="9">Several genes are coding for this toxin for which the structure by NMR has been determined. The cross-references to PDB and additional information can be found in entry AC D2Y1X9.</text>
</comment>
<feature type="signal peptide" evidence="1">
    <location>
        <begin position="1"/>
        <end position="21"/>
    </location>
</feature>
<feature type="propeptide" id="PRO_0000400524" evidence="2 3">
    <location>
        <begin position="22"/>
        <end position="48"/>
    </location>
</feature>
<feature type="peptide" id="PRO_0000400525" description="Hainantoxin-III 11" evidence="2 3">
    <location>
        <begin position="49"/>
        <end position="81"/>
    </location>
</feature>
<feature type="modified residue" description="Leucine amide" evidence="2">
    <location>
        <position position="81"/>
    </location>
</feature>
<feature type="disulfide bond" evidence="4 6">
    <location>
        <begin position="50"/>
        <end position="65"/>
    </location>
</feature>
<feature type="disulfide bond" evidence="4 6">
    <location>
        <begin position="57"/>
        <end position="70"/>
    </location>
</feature>
<feature type="disulfide bond" evidence="4 6">
    <location>
        <begin position="64"/>
        <end position="77"/>
    </location>
</feature>
<proteinExistence type="evidence at protein level"/>
<accession>D2Y2D3</accession>
<accession>P83464</accession>
<reference key="1">
    <citation type="journal article" date="2010" name="J. Proteome Res.">
        <title>Molecular diversification of peptide toxins from the tarantula Haplopelma hainanum (Ornithoctonus hainana) venom based on transcriptomic, peptidomic, and genomic analyses.</title>
        <authorList>
            <person name="Tang X."/>
            <person name="Zhang Y."/>
            <person name="Hu W."/>
            <person name="Xu D."/>
            <person name="Tao H."/>
            <person name="Yang X."/>
            <person name="Li Y."/>
            <person name="Jiang L."/>
            <person name="Liang S."/>
        </authorList>
    </citation>
    <scope>NUCLEOTIDE SEQUENCE [LARGE SCALE MRNA]</scope>
    <scope>PROTEIN SEQUENCE OF 49-81</scope>
    <scope>IDENTIFICATION BY MASS SPECTROMETRY</scope>
    <source>
        <tissue>Venom</tissue>
        <tissue>Venom gland</tissue>
    </source>
</reference>
<reference key="2">
    <citation type="journal article" date="2003" name="Eur. J. Pharmacol.">
        <title>Inhibition of neuronal tetrodotoxin-sensitive Na+ channels by two spider toxins: hainantoxin-III and hainantoxin-IV.</title>
        <authorList>
            <person name="Xiao Y."/>
            <person name="Liang S."/>
        </authorList>
    </citation>
    <scope>PROTEIN SEQUENCE OF 49-81</scope>
    <scope>FUNCTION</scope>
    <scope>SUBCELLULAR LOCATION</scope>
    <scope>AMIDATION AT LEU-81</scope>
    <source>
        <tissue>Venom</tissue>
    </source>
</reference>
<reference key="3">
    <citation type="submission" date="2002-10" db="UniProtKB">
        <title>Function and solution structure of hainantoxin-III, a potent neuronal TTX-sensitive sodium channel antagonist from Chinese bird spider Selenocosmia hainana.</title>
        <authorList>
            <person name="Zhu Q."/>
            <person name="Liu Z.-H."/>
            <person name="Liang S.-P."/>
        </authorList>
    </citation>
    <scope>SUBUNIT</scope>
    <scope>MASS SPECTROMETRY</scope>
</reference>
<reference key="4">
    <citation type="journal article" date="2013" name="J. Biol. Chem.">
        <title>Structure and function of hainantoxin-III, a selective antagonist of neuronal tetrodotoxin-sensitive voltage-gated sodium channels isolated from the Chinese bird spider Ornithoctonus hainana.</title>
        <authorList>
            <person name="Liu Z."/>
            <person name="Cai T."/>
            <person name="Zhu Q."/>
            <person name="Deng M."/>
            <person name="Li J."/>
            <person name="Zhou X."/>
            <person name="Zhang F."/>
            <person name="Li D."/>
            <person name="Li J."/>
            <person name="Liu Y."/>
            <person name="Hu W."/>
            <person name="Liang S."/>
        </authorList>
    </citation>
    <scope>FUNCTION</scope>
    <scope>SUBCELLULAR LOCATION</scope>
    <scope>STRUCTURE BY NMR OF 49-81</scope>
    <scope>DISULFIDE BONDS</scope>
    <source>
        <tissue>Venom</tissue>
    </source>
</reference>
<reference key="5">
    <citation type="submission" date="2007-07" db="PDB data bank">
        <title>Three dimensional solution structure of hainantoxin-III by 2D 1H-NMR.</title>
        <authorList>
            <person name="Zhu Q."/>
            <person name="Liu Z."/>
            <person name="Liang S."/>
        </authorList>
    </citation>
    <scope>STRUCTURE BY NMR OF 49-81</scope>
    <scope>DISULFIDE BONDS</scope>
</reference>
<evidence type="ECO:0000255" key="1"/>
<evidence type="ECO:0000269" key="2">
    <source>
    </source>
</evidence>
<evidence type="ECO:0000269" key="3">
    <source>
    </source>
</evidence>
<evidence type="ECO:0000269" key="4">
    <source>
    </source>
</evidence>
<evidence type="ECO:0000269" key="5">
    <source ref="3"/>
</evidence>
<evidence type="ECO:0000269" key="6">
    <source ref="5"/>
</evidence>
<evidence type="ECO:0000303" key="7">
    <source>
    </source>
</evidence>
<evidence type="ECO:0000303" key="8">
    <source ref="5"/>
</evidence>
<evidence type="ECO:0000305" key="9"/>
<evidence type="ECO:0000305" key="10">
    <source>
    </source>
</evidence>
<evidence type="ECO:0000305" key="11">
    <source>
    </source>
</evidence>
<keyword id="KW-0027">Amidation</keyword>
<keyword id="KW-0903">Direct protein sequencing</keyword>
<keyword id="KW-1015">Disulfide bond</keyword>
<keyword id="KW-0872">Ion channel impairing toxin</keyword>
<keyword id="KW-0960">Knottin</keyword>
<keyword id="KW-0528">Neurotoxin</keyword>
<keyword id="KW-0638">Presynaptic neurotoxin</keyword>
<keyword id="KW-0964">Secreted</keyword>
<keyword id="KW-0732">Signal</keyword>
<keyword id="KW-0800">Toxin</keyword>
<keyword id="KW-0738">Voltage-gated sodium channel impairing toxin</keyword>
<dbReference type="EMBL" id="GU293010">
    <property type="protein sequence ID" value="ADB56826.1"/>
    <property type="molecule type" value="mRNA"/>
</dbReference>
<dbReference type="SMR" id="D2Y2D3"/>
<dbReference type="ArachnoServer" id="AS000339">
    <property type="toxin name" value="mu-theraphotoxin-Hhn2a"/>
</dbReference>
<dbReference type="GO" id="GO:0005576">
    <property type="term" value="C:extracellular region"/>
    <property type="evidence" value="ECO:0007669"/>
    <property type="project" value="UniProtKB-SubCell"/>
</dbReference>
<dbReference type="GO" id="GO:0044231">
    <property type="term" value="C:host cell presynaptic membrane"/>
    <property type="evidence" value="ECO:0007669"/>
    <property type="project" value="UniProtKB-KW"/>
</dbReference>
<dbReference type="GO" id="GO:0008200">
    <property type="term" value="F:ion channel inhibitor activity"/>
    <property type="evidence" value="ECO:0007669"/>
    <property type="project" value="InterPro"/>
</dbReference>
<dbReference type="GO" id="GO:0017080">
    <property type="term" value="F:sodium channel regulator activity"/>
    <property type="evidence" value="ECO:0007669"/>
    <property type="project" value="UniProtKB-KW"/>
</dbReference>
<dbReference type="GO" id="GO:0090729">
    <property type="term" value="F:toxin activity"/>
    <property type="evidence" value="ECO:0007669"/>
    <property type="project" value="UniProtKB-KW"/>
</dbReference>
<dbReference type="InterPro" id="IPR011696">
    <property type="entry name" value="Huwentoxin-1"/>
</dbReference>
<dbReference type="InterPro" id="IPR013140">
    <property type="entry name" value="Huwentoxin_CS1"/>
</dbReference>
<dbReference type="Pfam" id="PF07740">
    <property type="entry name" value="Toxin_12"/>
    <property type="match status" value="1"/>
</dbReference>
<dbReference type="SUPFAM" id="SSF57059">
    <property type="entry name" value="omega toxin-like"/>
    <property type="match status" value="1"/>
</dbReference>
<dbReference type="PROSITE" id="PS60021">
    <property type="entry name" value="HWTX_1"/>
    <property type="match status" value="1"/>
</dbReference>
<name>H3A11_CYRHA</name>
<protein>
    <recommendedName>
        <fullName evidence="7 8">Hainantoxin-III 11</fullName>
        <shortName evidence="7 8">HnTx-III</shortName>
    </recommendedName>
    <alternativeName>
        <fullName>Hainantoxin-3.11</fullName>
    </alternativeName>
    <alternativeName>
        <fullName>Mu-theraphotoxin-Hhn2a</fullName>
        <shortName>Mu-TRTX-Hhn2a</shortName>
    </alternativeName>
    <alternativeName>
        <fullName>Peptide F7-18.76</fullName>
    </alternativeName>
</protein>